<keyword id="KW-0175">Coiled coil</keyword>
<keyword id="KW-0539">Nucleus</keyword>
<keyword id="KW-1185">Reference proteome</keyword>
<keyword id="KW-0690">Ribosome biogenesis</keyword>
<keyword id="KW-0698">rRNA processing</keyword>
<protein>
    <recommendedName>
        <fullName evidence="1">Pescadillo homolog</fullName>
    </recommendedName>
</protein>
<feature type="chain" id="PRO_0000370472" description="Pescadillo homolog">
    <location>
        <begin position="1"/>
        <end position="671"/>
    </location>
</feature>
<feature type="domain" description="BRCT" evidence="1">
    <location>
        <begin position="317"/>
        <end position="403"/>
    </location>
</feature>
<feature type="region of interest" description="Disordered" evidence="2">
    <location>
        <begin position="552"/>
        <end position="577"/>
    </location>
</feature>
<feature type="region of interest" description="Disordered" evidence="2">
    <location>
        <begin position="634"/>
        <end position="671"/>
    </location>
</feature>
<feature type="coiled-coil region" evidence="1">
    <location>
        <begin position="294"/>
        <end position="323"/>
    </location>
</feature>
<feature type="coiled-coil region" evidence="1">
    <location>
        <begin position="548"/>
        <end position="584"/>
    </location>
</feature>
<feature type="compositionally biased region" description="Basic and acidic residues" evidence="2">
    <location>
        <begin position="634"/>
        <end position="651"/>
    </location>
</feature>
<organism>
    <name type="scientific">Leishmania major</name>
    <dbReference type="NCBI Taxonomy" id="5664"/>
    <lineage>
        <taxon>Eukaryota</taxon>
        <taxon>Discoba</taxon>
        <taxon>Euglenozoa</taxon>
        <taxon>Kinetoplastea</taxon>
        <taxon>Metakinetoplastina</taxon>
        <taxon>Trypanosomatida</taxon>
        <taxon>Trypanosomatidae</taxon>
        <taxon>Leishmaniinae</taxon>
        <taxon>Leishmania</taxon>
    </lineage>
</organism>
<gene>
    <name type="ORF">LmjF22.0030</name>
    <name type="ORF">LmjF_04_0810</name>
</gene>
<evidence type="ECO:0000255" key="1">
    <source>
        <dbReference type="HAMAP-Rule" id="MF_03028"/>
    </source>
</evidence>
<evidence type="ECO:0000256" key="2">
    <source>
        <dbReference type="SAM" id="MobiDB-lite"/>
    </source>
</evidence>
<comment type="function">
    <text evidence="1">Required for maturation of ribosomal RNAs and formation of the large ribosomal subunit.</text>
</comment>
<comment type="subcellular location">
    <subcellularLocation>
        <location evidence="1">Nucleus</location>
        <location evidence="1">Nucleolus</location>
    </subcellularLocation>
    <subcellularLocation>
        <location evidence="1">Nucleus</location>
        <location evidence="1">Nucleoplasm</location>
    </subcellularLocation>
</comment>
<comment type="similarity">
    <text evidence="1">Belongs to the pescadillo family.</text>
</comment>
<name>PESC_LEIMA</name>
<sequence length="671" mass="77290">MVHKKQAWAKRVKKERFKKKFLTRMQATRLLQMESVQFRRLCILKGIYPRALNRSKQKQSGNEKQYYLAREIKWLVRDQIAEKMMAYRAWEKKVKRAEAMGRSEDLKVLQTSRVKPRHSLVATIKERYPYFIDAIRDVDDAMSMIHLYAFLSPEIKSDTTIEIHHSLTSGLSERAKEVCERWDRYVARARVLTKGFISIKGYYYEAIVKGERVRWLCPHEYAHRFPPGIQQYVMLSFLEFYLEMMKFVLFKLESDLARDEADRLAAEDEEGVTRANAEDFANGAALAVLDVGANQAQAKAVKEAESKRSLMEEELHKVRELFRGLTFFISREVPAKHFALVINACGGRVATDYVPSNITHVVVDRPALPPGMKKHDQLEYVQPQYIFDCLNARLVLPVTGYRIGEELPPHVSPFSVSITNSAEDNAAVVQVKKDHPRIVGYVPARVHEIRKLINPSYSAVDPEGKVAHLEDEYSDEESHVAVPEMDMEDDVSLSGDELAEARRKPAWQEEEVTEEVQRPKLSAFKVKKQREMNLMNAPTNEVVARRRQALRKAQEKSRQTETSEARLQRKMSEVKRQEAATRKMQLQVARKKAARFYKMVSGVVQGTAKKVATLEAKAKHIAEGKLRKTEDGKGLVNKRLEARRQRAEAKGKKLKERKAGNPYKKLPKWVQ</sequence>
<dbReference type="EMBL" id="FR796400">
    <property type="protein sequence ID" value="CAC22625.1"/>
    <property type="molecule type" value="Genomic_DNA"/>
</dbReference>
<dbReference type="RefSeq" id="XP_888589.1">
    <property type="nucleotide sequence ID" value="XM_883496.1"/>
</dbReference>
<dbReference type="SMR" id="O97209"/>
<dbReference type="FunCoup" id="O97209">
    <property type="interactions" value="490"/>
</dbReference>
<dbReference type="STRING" id="5664.O97209"/>
<dbReference type="EnsemblProtists" id="CAC22625">
    <property type="protein sequence ID" value="CAC22625"/>
    <property type="gene ID" value="LMJF_04_0810"/>
</dbReference>
<dbReference type="GeneID" id="3684880"/>
<dbReference type="KEGG" id="lma:LMJF_04_0810"/>
<dbReference type="VEuPathDB" id="TriTrypDB:LmjF.04.0810"/>
<dbReference type="VEuPathDB" id="TriTrypDB:LMJFC_040015000"/>
<dbReference type="VEuPathDB" id="TriTrypDB:LMJLV39_040013500"/>
<dbReference type="VEuPathDB" id="TriTrypDB:LMJSD75_040013800"/>
<dbReference type="eggNOG" id="KOG2481">
    <property type="taxonomic scope" value="Eukaryota"/>
</dbReference>
<dbReference type="InParanoid" id="O97209"/>
<dbReference type="OMA" id="MAYCAWE"/>
<dbReference type="PHI-base" id="PHI:12114"/>
<dbReference type="Proteomes" id="UP000000542">
    <property type="component" value="Chromosome 4"/>
</dbReference>
<dbReference type="GO" id="GO:0005730">
    <property type="term" value="C:nucleolus"/>
    <property type="evidence" value="ECO:0000266"/>
    <property type="project" value="GeneDB"/>
</dbReference>
<dbReference type="GO" id="GO:0005654">
    <property type="term" value="C:nucleoplasm"/>
    <property type="evidence" value="ECO:0007669"/>
    <property type="project" value="UniProtKB-SubCell"/>
</dbReference>
<dbReference type="GO" id="GO:0070545">
    <property type="term" value="C:PeBoW complex"/>
    <property type="evidence" value="ECO:0000318"/>
    <property type="project" value="GO_Central"/>
</dbReference>
<dbReference type="GO" id="GO:0030687">
    <property type="term" value="C:preribosome, large subunit precursor"/>
    <property type="evidence" value="ECO:0007669"/>
    <property type="project" value="UniProtKB-UniRule"/>
</dbReference>
<dbReference type="GO" id="GO:0043021">
    <property type="term" value="F:ribonucleoprotein complex binding"/>
    <property type="evidence" value="ECO:0007669"/>
    <property type="project" value="UniProtKB-UniRule"/>
</dbReference>
<dbReference type="GO" id="GO:0003723">
    <property type="term" value="F:RNA binding"/>
    <property type="evidence" value="ECO:0000318"/>
    <property type="project" value="GO_Central"/>
</dbReference>
<dbReference type="GO" id="GO:0000466">
    <property type="term" value="P:maturation of 5.8S rRNA from tricistronic rRNA transcript (SSU-rRNA, 5.8S rRNA, LSU-rRNA)"/>
    <property type="evidence" value="ECO:0007669"/>
    <property type="project" value="UniProtKB-UniRule"/>
</dbReference>
<dbReference type="GO" id="GO:0000463">
    <property type="term" value="P:maturation of LSU-rRNA from tricistronic rRNA transcript (SSU-rRNA, 5.8S rRNA, LSU-rRNA)"/>
    <property type="evidence" value="ECO:0000318"/>
    <property type="project" value="GO_Central"/>
</dbReference>
<dbReference type="CDD" id="cd17709">
    <property type="entry name" value="BRCT_pescadillo_like"/>
    <property type="match status" value="1"/>
</dbReference>
<dbReference type="FunFam" id="3.40.50.10190:FF:000108">
    <property type="entry name" value="Pescadillo homolog"/>
    <property type="match status" value="1"/>
</dbReference>
<dbReference type="Gene3D" id="3.40.50.10190">
    <property type="entry name" value="BRCT domain"/>
    <property type="match status" value="1"/>
</dbReference>
<dbReference type="HAMAP" id="MF_03028">
    <property type="entry name" value="Pescadillo"/>
    <property type="match status" value="1"/>
</dbReference>
<dbReference type="InterPro" id="IPR001357">
    <property type="entry name" value="BRCT_dom"/>
</dbReference>
<dbReference type="InterPro" id="IPR036420">
    <property type="entry name" value="BRCT_dom_sf"/>
</dbReference>
<dbReference type="InterPro" id="IPR010613">
    <property type="entry name" value="PES"/>
</dbReference>
<dbReference type="PANTHER" id="PTHR12221">
    <property type="entry name" value="PESCADILLO - RELATED"/>
    <property type="match status" value="1"/>
</dbReference>
<dbReference type="PANTHER" id="PTHR12221:SF6">
    <property type="entry name" value="PESCADILLO HOMOLOG"/>
    <property type="match status" value="1"/>
</dbReference>
<dbReference type="Pfam" id="PF16589">
    <property type="entry name" value="BRCT_2"/>
    <property type="match status" value="1"/>
</dbReference>
<dbReference type="Pfam" id="PF06732">
    <property type="entry name" value="Pescadillo_N"/>
    <property type="match status" value="1"/>
</dbReference>
<dbReference type="SMART" id="SM00292">
    <property type="entry name" value="BRCT"/>
    <property type="match status" value="1"/>
</dbReference>
<dbReference type="SUPFAM" id="SSF52113">
    <property type="entry name" value="BRCT domain"/>
    <property type="match status" value="1"/>
</dbReference>
<dbReference type="PROSITE" id="PS50172">
    <property type="entry name" value="BRCT"/>
    <property type="match status" value="1"/>
</dbReference>
<accession>O97209</accession>
<reference key="1">
    <citation type="journal article" date="2005" name="Science">
        <title>The genome of the kinetoplastid parasite, Leishmania major.</title>
        <authorList>
            <person name="Ivens A.C."/>
            <person name="Peacock C.S."/>
            <person name="Worthey E.A."/>
            <person name="Murphy L."/>
            <person name="Aggarwal G."/>
            <person name="Berriman M."/>
            <person name="Sisk E."/>
            <person name="Rajandream M.A."/>
            <person name="Adlem E."/>
            <person name="Aert R."/>
            <person name="Anupama A."/>
            <person name="Apostolou Z."/>
            <person name="Attipoe P."/>
            <person name="Bason N."/>
            <person name="Bauser C."/>
            <person name="Beck A."/>
            <person name="Beverley S.M."/>
            <person name="Bianchettin G."/>
            <person name="Borzym K."/>
            <person name="Bothe G."/>
            <person name="Bruschi C.V."/>
            <person name="Collins M."/>
            <person name="Cadag E."/>
            <person name="Ciarloni L."/>
            <person name="Clayton C."/>
            <person name="Coulson R.M.R."/>
            <person name="Cronin A."/>
            <person name="Cruz A.K."/>
            <person name="Davies R.M."/>
            <person name="De Gaudenzi J."/>
            <person name="Dobson D.E."/>
            <person name="Duesterhoeft A."/>
            <person name="Fazelina G."/>
            <person name="Fosker N."/>
            <person name="Frasch A.C."/>
            <person name="Fraser A."/>
            <person name="Fuchs M."/>
            <person name="Gabel C."/>
            <person name="Goble A."/>
            <person name="Goffeau A."/>
            <person name="Harris D."/>
            <person name="Hertz-Fowler C."/>
            <person name="Hilbert H."/>
            <person name="Horn D."/>
            <person name="Huang Y."/>
            <person name="Klages S."/>
            <person name="Knights A."/>
            <person name="Kube M."/>
            <person name="Larke N."/>
            <person name="Litvin L."/>
            <person name="Lord A."/>
            <person name="Louie T."/>
            <person name="Marra M."/>
            <person name="Masuy D."/>
            <person name="Matthews K."/>
            <person name="Michaeli S."/>
            <person name="Mottram J.C."/>
            <person name="Mueller-Auer S."/>
            <person name="Munden H."/>
            <person name="Nelson S."/>
            <person name="Norbertczak H."/>
            <person name="Oliver K."/>
            <person name="O'neil S."/>
            <person name="Pentony M."/>
            <person name="Pohl T.M."/>
            <person name="Price C."/>
            <person name="Purnelle B."/>
            <person name="Quail M.A."/>
            <person name="Rabbinowitsch E."/>
            <person name="Reinhardt R."/>
            <person name="Rieger M."/>
            <person name="Rinta J."/>
            <person name="Robben J."/>
            <person name="Robertson L."/>
            <person name="Ruiz J.C."/>
            <person name="Rutter S."/>
            <person name="Saunders D."/>
            <person name="Schaefer M."/>
            <person name="Schein J."/>
            <person name="Schwartz D.C."/>
            <person name="Seeger K."/>
            <person name="Seyler A."/>
            <person name="Sharp S."/>
            <person name="Shin H."/>
            <person name="Sivam D."/>
            <person name="Squares R."/>
            <person name="Squares S."/>
            <person name="Tosato V."/>
            <person name="Vogt C."/>
            <person name="Volckaert G."/>
            <person name="Wambutt R."/>
            <person name="Warren T."/>
            <person name="Wedler H."/>
            <person name="Woodward J."/>
            <person name="Zhou S."/>
            <person name="Zimmermann W."/>
            <person name="Smith D.F."/>
            <person name="Blackwell J.M."/>
            <person name="Stuart K.D."/>
            <person name="Barrell B.G."/>
            <person name="Myler P.J."/>
        </authorList>
    </citation>
    <scope>NUCLEOTIDE SEQUENCE [LARGE SCALE GENOMIC DNA]</scope>
    <source>
        <strain>MHOM/IL/81/Friedlin</strain>
    </source>
</reference>
<proteinExistence type="inferred from homology"/>